<sequence>MNWIFIFLAAAVAIGCEARQERTYTVCQKPEGDLHYFKEGRKTDEELCAKRLATAYFHDEVNQTGWAFLEVDVISPKIPHYLQGYAAGFAEGRATRHLIDLHIINTVNGYCDGAKHFCDELGEFMVDNLKWMEQEIRENPEDEYWQQVNLTVNQLFGLIHGYENQLGAEIDFKQIAVHPIFMIQIAGDLEDLAMKFKKPENPKKVFSGPGHCSALVKLLPKNEDILFSHVTWSSYGTMLRINKKYSFKTGDPGQIYSFSSYPASITSTDDFVLTSAKLAILETTIGNYNEKSLDLITPNTVLTWIRAEIAHRTASSGLQWAEAFGRHNSGTYNNEWVVVDYKQFHRGKEVQPETGIIHVVEQMPGHIVHSDKTAHLFRETYWPGYNQPYYKQIIRFSDTDKMVEKFGDWYSYDKTPRALIFKRDHNTVTDMSSMIALMRSNNYTKDPLSKCDCNPPYSAENAIACRSDLNPLNGTYPFKSLGFRDHGAIDVKVTNSKLINSLQFTAVSGPPGGVTKDVPIFDWKTSPLREKVPHFGQPDRWNFAPVTYKWRKDAHRHYHLYQKLHKELSSL</sequence>
<evidence type="ECO:0000250" key="1"/>
<evidence type="ECO:0000255" key="2"/>
<evidence type="ECO:0000269" key="3">
    <source>
    </source>
</evidence>
<evidence type="ECO:0000305" key="4"/>
<gene>
    <name type="ORF">Y37D8A.2</name>
</gene>
<feature type="signal peptide" evidence="2">
    <location>
        <begin position="1"/>
        <end position="18"/>
    </location>
</feature>
<feature type="chain" id="PRO_0000286113" description="Putative phospholipase B-like 1">
    <location>
        <begin position="19"/>
        <end position="571"/>
    </location>
</feature>
<feature type="glycosylation site" description="N-linked (GlcNAc...) asparagine" evidence="3">
    <location>
        <position position="62"/>
    </location>
</feature>
<feature type="glycosylation site" description="N-linked (GlcNAc...) asparagine" evidence="2">
    <location>
        <position position="149"/>
    </location>
</feature>
<feature type="glycosylation site" description="N-linked (GlcNAc...) asparagine" evidence="3">
    <location>
        <position position="442"/>
    </location>
</feature>
<feature type="glycosylation site" description="N-linked (GlcNAc...) asparagine" evidence="3">
    <location>
        <position position="473"/>
    </location>
</feature>
<protein>
    <recommendedName>
        <fullName>Putative phospholipase B-like 1</fullName>
        <ecNumber>3.1.1.-</ecNumber>
    </recommendedName>
    <alternativeName>
        <fullName>LAMA-like protein 1</fullName>
    </alternativeName>
    <alternativeName>
        <fullName>Lamina ancestor homolog 1</fullName>
    </alternativeName>
</protein>
<dbReference type="EC" id="3.1.1.-"/>
<dbReference type="EMBL" id="AL032626">
    <property type="protein sequence ID" value="CAA21539.1"/>
    <property type="molecule type" value="Genomic_DNA"/>
</dbReference>
<dbReference type="PIR" id="T26638">
    <property type="entry name" value="T26638"/>
</dbReference>
<dbReference type="RefSeq" id="NP_499668.1">
    <property type="nucleotide sequence ID" value="NM_067267.7"/>
</dbReference>
<dbReference type="SMR" id="Q9XWV2"/>
<dbReference type="BioGRID" id="41873">
    <property type="interactions" value="8"/>
</dbReference>
<dbReference type="FunCoup" id="Q9XWV2">
    <property type="interactions" value="971"/>
</dbReference>
<dbReference type="STRING" id="6239.Y37D8A.2.1"/>
<dbReference type="iPTMnet" id="Q9XWV2"/>
<dbReference type="PaxDb" id="6239-Y37D8A.2"/>
<dbReference type="PeptideAtlas" id="Q9XWV2"/>
<dbReference type="EnsemblMetazoa" id="Y37D8A.2.1">
    <property type="protein sequence ID" value="Y37D8A.2.1"/>
    <property type="gene ID" value="WBGene00012544"/>
</dbReference>
<dbReference type="GeneID" id="176698"/>
<dbReference type="KEGG" id="cel:CELE_Y37D8A.2"/>
<dbReference type="UCSC" id="Y37D8A.2">
    <property type="organism name" value="c. elegans"/>
</dbReference>
<dbReference type="AGR" id="WB:WBGene00012544"/>
<dbReference type="CTD" id="176698"/>
<dbReference type="WormBase" id="Y37D8A.2">
    <property type="protein sequence ID" value="CE20207"/>
    <property type="gene ID" value="WBGene00012544"/>
</dbReference>
<dbReference type="eggNOG" id="KOG3774">
    <property type="taxonomic scope" value="Eukaryota"/>
</dbReference>
<dbReference type="GeneTree" id="ENSGT00530000063509"/>
<dbReference type="HOGENOM" id="CLU_027106_4_0_1"/>
<dbReference type="InParanoid" id="Q9XWV2"/>
<dbReference type="OMA" id="YQEGYWA"/>
<dbReference type="OrthoDB" id="443524at2759"/>
<dbReference type="PhylomeDB" id="Q9XWV2"/>
<dbReference type="PRO" id="PR:Q9XWV2"/>
<dbReference type="Proteomes" id="UP000001940">
    <property type="component" value="Chromosome III"/>
</dbReference>
<dbReference type="Bgee" id="WBGene00012544">
    <property type="expression patterns" value="Expressed in larva and 4 other cell types or tissues"/>
</dbReference>
<dbReference type="GO" id="GO:0005576">
    <property type="term" value="C:extracellular region"/>
    <property type="evidence" value="ECO:0000318"/>
    <property type="project" value="GO_Central"/>
</dbReference>
<dbReference type="GO" id="GO:0005764">
    <property type="term" value="C:lysosome"/>
    <property type="evidence" value="ECO:0007669"/>
    <property type="project" value="UniProtKB-SubCell"/>
</dbReference>
<dbReference type="GO" id="GO:0004620">
    <property type="term" value="F:phospholipase activity"/>
    <property type="evidence" value="ECO:0000318"/>
    <property type="project" value="GO_Central"/>
</dbReference>
<dbReference type="GO" id="GO:0009395">
    <property type="term" value="P:phospholipid catabolic process"/>
    <property type="evidence" value="ECO:0000318"/>
    <property type="project" value="GO_Central"/>
</dbReference>
<dbReference type="Gene3D" id="3.60.60.30">
    <property type="match status" value="1"/>
</dbReference>
<dbReference type="InterPro" id="IPR007000">
    <property type="entry name" value="PLipase_B-like"/>
</dbReference>
<dbReference type="PANTHER" id="PTHR12370:SF3">
    <property type="entry name" value="PHOSPHOLIPASE B-LIKE 2-RELATED"/>
    <property type="match status" value="1"/>
</dbReference>
<dbReference type="PANTHER" id="PTHR12370">
    <property type="entry name" value="PHOSPHOLIPASE B-RELATED"/>
    <property type="match status" value="1"/>
</dbReference>
<dbReference type="Pfam" id="PF04916">
    <property type="entry name" value="Phospholip_B"/>
    <property type="match status" value="1"/>
</dbReference>
<name>PLBL1_CAEEL</name>
<accession>Q9XWV2</accession>
<organism>
    <name type="scientific">Caenorhabditis elegans</name>
    <dbReference type="NCBI Taxonomy" id="6239"/>
    <lineage>
        <taxon>Eukaryota</taxon>
        <taxon>Metazoa</taxon>
        <taxon>Ecdysozoa</taxon>
        <taxon>Nematoda</taxon>
        <taxon>Chromadorea</taxon>
        <taxon>Rhabditida</taxon>
        <taxon>Rhabditina</taxon>
        <taxon>Rhabditomorpha</taxon>
        <taxon>Rhabditoidea</taxon>
        <taxon>Rhabditidae</taxon>
        <taxon>Peloderinae</taxon>
        <taxon>Caenorhabditis</taxon>
    </lineage>
</organism>
<reference key="1">
    <citation type="journal article" date="1998" name="Science">
        <title>Genome sequence of the nematode C. elegans: a platform for investigating biology.</title>
        <authorList>
            <consortium name="The C. elegans sequencing consortium"/>
        </authorList>
    </citation>
    <scope>NUCLEOTIDE SEQUENCE [LARGE SCALE GENOMIC DNA]</scope>
    <source>
        <strain>Bristol N2</strain>
    </source>
</reference>
<reference key="2">
    <citation type="journal article" date="2007" name="Mol. Cell. Proteomics">
        <title>Proteomics reveals N-linked glycoprotein diversity in Caenorhabditis elegans and suggests an atypical translocation mechanism for integral membrane proteins.</title>
        <authorList>
            <person name="Kaji H."/>
            <person name="Kamiie J."/>
            <person name="Kawakami H."/>
            <person name="Kido K."/>
            <person name="Yamauchi Y."/>
            <person name="Shinkawa T."/>
            <person name="Taoka M."/>
            <person name="Takahashi N."/>
            <person name="Isobe T."/>
        </authorList>
    </citation>
    <scope>GLYCOSYLATION [LARGE SCALE ANALYSIS] AT ASN-62; ASN-442 AND ASN-473</scope>
    <scope>IDENTIFICATION BY MASS SPECTROMETRY</scope>
    <source>
        <strain>Bristol N2</strain>
    </source>
</reference>
<proteinExistence type="evidence at protein level"/>
<comment type="function">
    <text evidence="1">Putative phospholipase.</text>
</comment>
<comment type="subcellular location">
    <subcellularLocation>
        <location evidence="1">Lysosome</location>
    </subcellularLocation>
</comment>
<comment type="similarity">
    <text evidence="4">Belongs to the phospholipase B-like family.</text>
</comment>
<keyword id="KW-0325">Glycoprotein</keyword>
<keyword id="KW-0378">Hydrolase</keyword>
<keyword id="KW-0442">Lipid degradation</keyword>
<keyword id="KW-0443">Lipid metabolism</keyword>
<keyword id="KW-0458">Lysosome</keyword>
<keyword id="KW-1185">Reference proteome</keyword>
<keyword id="KW-0732">Signal</keyword>